<dbReference type="EC" id="4.2.1.17" evidence="1"/>
<dbReference type="EC" id="5.1.2.3" evidence="1"/>
<dbReference type="EC" id="5.3.3.8" evidence="1"/>
<dbReference type="EC" id="1.1.1.35" evidence="1"/>
<dbReference type="EMBL" id="CP000821">
    <property type="protein sequence ID" value="ABV34636.1"/>
    <property type="molecule type" value="Genomic_DNA"/>
</dbReference>
<dbReference type="RefSeq" id="WP_012004162.1">
    <property type="nucleotide sequence ID" value="NC_009831.1"/>
</dbReference>
<dbReference type="SMR" id="A8FP63"/>
<dbReference type="STRING" id="425104.Ssed_0023"/>
<dbReference type="KEGG" id="sse:Ssed_0023"/>
<dbReference type="eggNOG" id="COG1024">
    <property type="taxonomic scope" value="Bacteria"/>
</dbReference>
<dbReference type="eggNOG" id="COG1250">
    <property type="taxonomic scope" value="Bacteria"/>
</dbReference>
<dbReference type="HOGENOM" id="CLU_009834_16_3_6"/>
<dbReference type="OrthoDB" id="5389341at2"/>
<dbReference type="UniPathway" id="UPA00659"/>
<dbReference type="Proteomes" id="UP000002015">
    <property type="component" value="Chromosome"/>
</dbReference>
<dbReference type="GO" id="GO:0036125">
    <property type="term" value="C:fatty acid beta-oxidation multienzyme complex"/>
    <property type="evidence" value="ECO:0007669"/>
    <property type="project" value="InterPro"/>
</dbReference>
<dbReference type="GO" id="GO:0008692">
    <property type="term" value="F:3-hydroxybutyryl-CoA epimerase activity"/>
    <property type="evidence" value="ECO:0007669"/>
    <property type="project" value="UniProtKB-UniRule"/>
</dbReference>
<dbReference type="GO" id="GO:0004165">
    <property type="term" value="F:delta(3)-delta(2)-enoyl-CoA isomerase activity"/>
    <property type="evidence" value="ECO:0007669"/>
    <property type="project" value="UniProtKB-UniRule"/>
</dbReference>
<dbReference type="GO" id="GO:0004300">
    <property type="term" value="F:enoyl-CoA hydratase activity"/>
    <property type="evidence" value="ECO:0007669"/>
    <property type="project" value="UniProtKB-UniRule"/>
</dbReference>
<dbReference type="GO" id="GO:0016509">
    <property type="term" value="F:long-chain-3-hydroxyacyl-CoA dehydrogenase activity"/>
    <property type="evidence" value="ECO:0007669"/>
    <property type="project" value="TreeGrafter"/>
</dbReference>
<dbReference type="GO" id="GO:0070403">
    <property type="term" value="F:NAD+ binding"/>
    <property type="evidence" value="ECO:0007669"/>
    <property type="project" value="InterPro"/>
</dbReference>
<dbReference type="GO" id="GO:0006635">
    <property type="term" value="P:fatty acid beta-oxidation"/>
    <property type="evidence" value="ECO:0007669"/>
    <property type="project" value="UniProtKB-UniRule"/>
</dbReference>
<dbReference type="CDD" id="cd06558">
    <property type="entry name" value="crotonase-like"/>
    <property type="match status" value="1"/>
</dbReference>
<dbReference type="FunFam" id="1.10.1040.50:FF:000001">
    <property type="entry name" value="Fatty acid oxidation complex subunit alpha"/>
    <property type="match status" value="1"/>
</dbReference>
<dbReference type="FunFam" id="3.40.50.720:FF:000009">
    <property type="entry name" value="Fatty oxidation complex, alpha subunit"/>
    <property type="match status" value="1"/>
</dbReference>
<dbReference type="Gene3D" id="1.10.1040.50">
    <property type="match status" value="1"/>
</dbReference>
<dbReference type="Gene3D" id="3.90.226.10">
    <property type="entry name" value="2-enoyl-CoA Hydratase, Chain A, domain 1"/>
    <property type="match status" value="1"/>
</dbReference>
<dbReference type="Gene3D" id="3.40.50.720">
    <property type="entry name" value="NAD(P)-binding Rossmann-like Domain"/>
    <property type="match status" value="1"/>
</dbReference>
<dbReference type="HAMAP" id="MF_01621">
    <property type="entry name" value="FadB"/>
    <property type="match status" value="1"/>
</dbReference>
<dbReference type="InterPro" id="IPR006180">
    <property type="entry name" value="3-OHacyl-CoA_DH_CS"/>
</dbReference>
<dbReference type="InterPro" id="IPR006176">
    <property type="entry name" value="3-OHacyl-CoA_DH_NAD-bd"/>
</dbReference>
<dbReference type="InterPro" id="IPR006108">
    <property type="entry name" value="3HC_DH_C"/>
</dbReference>
<dbReference type="InterPro" id="IPR008927">
    <property type="entry name" value="6-PGluconate_DH-like_C_sf"/>
</dbReference>
<dbReference type="InterPro" id="IPR029045">
    <property type="entry name" value="ClpP/crotonase-like_dom_sf"/>
</dbReference>
<dbReference type="InterPro" id="IPR018376">
    <property type="entry name" value="Enoyl-CoA_hyd/isom_CS"/>
</dbReference>
<dbReference type="InterPro" id="IPR001753">
    <property type="entry name" value="Enoyl-CoA_hydra/iso"/>
</dbReference>
<dbReference type="InterPro" id="IPR050136">
    <property type="entry name" value="FA_oxidation_alpha_subunit"/>
</dbReference>
<dbReference type="InterPro" id="IPR012799">
    <property type="entry name" value="FadB"/>
</dbReference>
<dbReference type="InterPro" id="IPR036291">
    <property type="entry name" value="NAD(P)-bd_dom_sf"/>
</dbReference>
<dbReference type="NCBIfam" id="TIGR02437">
    <property type="entry name" value="FadB"/>
    <property type="match status" value="1"/>
</dbReference>
<dbReference type="NCBIfam" id="NF008727">
    <property type="entry name" value="PRK11730.1"/>
    <property type="match status" value="1"/>
</dbReference>
<dbReference type="PANTHER" id="PTHR43612">
    <property type="entry name" value="TRIFUNCTIONAL ENZYME SUBUNIT ALPHA"/>
    <property type="match status" value="1"/>
</dbReference>
<dbReference type="PANTHER" id="PTHR43612:SF3">
    <property type="entry name" value="TRIFUNCTIONAL ENZYME SUBUNIT ALPHA, MITOCHONDRIAL"/>
    <property type="match status" value="1"/>
</dbReference>
<dbReference type="Pfam" id="PF00725">
    <property type="entry name" value="3HCDH"/>
    <property type="match status" value="1"/>
</dbReference>
<dbReference type="Pfam" id="PF02737">
    <property type="entry name" value="3HCDH_N"/>
    <property type="match status" value="1"/>
</dbReference>
<dbReference type="Pfam" id="PF00378">
    <property type="entry name" value="ECH_1"/>
    <property type="match status" value="1"/>
</dbReference>
<dbReference type="SUPFAM" id="SSF48179">
    <property type="entry name" value="6-phosphogluconate dehydrogenase C-terminal domain-like"/>
    <property type="match status" value="2"/>
</dbReference>
<dbReference type="SUPFAM" id="SSF52096">
    <property type="entry name" value="ClpP/crotonase"/>
    <property type="match status" value="1"/>
</dbReference>
<dbReference type="SUPFAM" id="SSF51735">
    <property type="entry name" value="NAD(P)-binding Rossmann-fold domains"/>
    <property type="match status" value="1"/>
</dbReference>
<dbReference type="PROSITE" id="PS00067">
    <property type="entry name" value="3HCDH"/>
    <property type="match status" value="1"/>
</dbReference>
<dbReference type="PROSITE" id="PS00166">
    <property type="entry name" value="ENOYL_COA_HYDRATASE"/>
    <property type="match status" value="1"/>
</dbReference>
<gene>
    <name evidence="1" type="primary">fadB</name>
    <name type="ordered locus">Ssed_0023</name>
</gene>
<evidence type="ECO:0000255" key="1">
    <source>
        <dbReference type="HAMAP-Rule" id="MF_01621"/>
    </source>
</evidence>
<feature type="chain" id="PRO_1000088085" description="Fatty acid oxidation complex subunit alpha">
    <location>
        <begin position="1"/>
        <end position="716"/>
    </location>
</feature>
<feature type="region of interest" description="Enoyl-CoA hydratase/isomerase" evidence="1">
    <location>
        <begin position="1"/>
        <end position="189"/>
    </location>
</feature>
<feature type="region of interest" description="3-hydroxyacyl-CoA dehydrogenase" evidence="1">
    <location>
        <begin position="311"/>
        <end position="716"/>
    </location>
</feature>
<feature type="active site" description="For 3-hydroxyacyl-CoA dehydrogenase activity" evidence="1">
    <location>
        <position position="450"/>
    </location>
</feature>
<feature type="binding site" evidence="1">
    <location>
        <position position="296"/>
    </location>
    <ligand>
        <name>substrate</name>
    </ligand>
</feature>
<feature type="binding site" evidence="1">
    <location>
        <position position="324"/>
    </location>
    <ligand>
        <name>NAD(+)</name>
        <dbReference type="ChEBI" id="CHEBI:57540"/>
    </ligand>
</feature>
<feature type="binding site" evidence="1">
    <location>
        <position position="343"/>
    </location>
    <ligand>
        <name>NAD(+)</name>
        <dbReference type="ChEBI" id="CHEBI:57540"/>
    </ligand>
</feature>
<feature type="binding site" evidence="1">
    <location>
        <begin position="400"/>
        <end position="402"/>
    </location>
    <ligand>
        <name>NAD(+)</name>
        <dbReference type="ChEBI" id="CHEBI:57540"/>
    </ligand>
</feature>
<feature type="binding site" evidence="1">
    <location>
        <position position="407"/>
    </location>
    <ligand>
        <name>NAD(+)</name>
        <dbReference type="ChEBI" id="CHEBI:57540"/>
    </ligand>
</feature>
<feature type="binding site" evidence="1">
    <location>
        <position position="429"/>
    </location>
    <ligand>
        <name>NAD(+)</name>
        <dbReference type="ChEBI" id="CHEBI:57540"/>
    </ligand>
</feature>
<feature type="binding site" evidence="1">
    <location>
        <position position="453"/>
    </location>
    <ligand>
        <name>NAD(+)</name>
        <dbReference type="ChEBI" id="CHEBI:57540"/>
    </ligand>
</feature>
<feature type="binding site" evidence="1">
    <location>
        <position position="500"/>
    </location>
    <ligand>
        <name>substrate</name>
    </ligand>
</feature>
<feature type="site" description="Important for catalytic activity" evidence="1">
    <location>
        <position position="119"/>
    </location>
</feature>
<feature type="site" description="Important for catalytic activity" evidence="1">
    <location>
        <position position="139"/>
    </location>
</feature>
<accession>A8FP63</accession>
<reference key="1">
    <citation type="submission" date="2007-08" db="EMBL/GenBank/DDBJ databases">
        <title>Complete sequence of Shewanella sediminis HAW-EB3.</title>
        <authorList>
            <consortium name="US DOE Joint Genome Institute"/>
            <person name="Copeland A."/>
            <person name="Lucas S."/>
            <person name="Lapidus A."/>
            <person name="Barry K."/>
            <person name="Glavina del Rio T."/>
            <person name="Dalin E."/>
            <person name="Tice H."/>
            <person name="Pitluck S."/>
            <person name="Chertkov O."/>
            <person name="Brettin T."/>
            <person name="Bruce D."/>
            <person name="Detter J.C."/>
            <person name="Han C."/>
            <person name="Schmutz J."/>
            <person name="Larimer F."/>
            <person name="Land M."/>
            <person name="Hauser L."/>
            <person name="Kyrpides N."/>
            <person name="Kim E."/>
            <person name="Zhao J.-S."/>
            <person name="Richardson P."/>
        </authorList>
    </citation>
    <scope>NUCLEOTIDE SEQUENCE [LARGE SCALE GENOMIC DNA]</scope>
    <source>
        <strain>HAW-EB3</strain>
    </source>
</reference>
<keyword id="KW-0276">Fatty acid metabolism</keyword>
<keyword id="KW-0413">Isomerase</keyword>
<keyword id="KW-0442">Lipid degradation</keyword>
<keyword id="KW-0443">Lipid metabolism</keyword>
<keyword id="KW-0456">Lyase</keyword>
<keyword id="KW-0511">Multifunctional enzyme</keyword>
<keyword id="KW-0520">NAD</keyword>
<keyword id="KW-0560">Oxidoreductase</keyword>
<keyword id="KW-1185">Reference proteome</keyword>
<name>FADB_SHESH</name>
<organism>
    <name type="scientific">Shewanella sediminis (strain HAW-EB3)</name>
    <dbReference type="NCBI Taxonomy" id="425104"/>
    <lineage>
        <taxon>Bacteria</taxon>
        <taxon>Pseudomonadati</taxon>
        <taxon>Pseudomonadota</taxon>
        <taxon>Gammaproteobacteria</taxon>
        <taxon>Alteromonadales</taxon>
        <taxon>Shewanellaceae</taxon>
        <taxon>Shewanella</taxon>
    </lineage>
</organism>
<sequence>MIYQSPTIQVELLEDNIARLCFNASGSVNKLDRETINSLDAALDAIQQDSHIQALVLTSAKGAFIVGADITEFLGLFAQEDSVLLPWIAEANVVFNKLEDLPFPTISAINGFALGGGFETVLATDFRIADTTAKIGLPETKLGLIPGFGGTVRLPRLIGTDNALEWITSGKDQRPEAALKVGAIDAVVAPENLQASAIKMLKDALAEKLDWQSRRARKQAALTLPKLEAMMSFATAKGMVFKIAGKHYPAPMAAISVIEQAARCGRADALKVEHQAFVKLAKTDVAQALIGIFLNDQLVKGKAKKAGKLAKNIDTAAVLGAGIMGGGIAYQSASKGTPIIMKDIAQPALELGLGEASKLLAAQIKRGRSTPQKMAKVLNNITATLDYTPVKDVDVVVEAVVEHPKVKSMVLAEVEQNVSDDAIITSNTSTISINLLAKSLKKPERFCGMHFFNPVHKMPLVEVIRGENSSEETIASVVAYASKMGKTPIVVNDCPGFFVNRVLFPYFAGFSGLLADGADFAAIDKVMEKQFGWPMGPAYLLDVVGIDTGHHAQAVMAEGFPDRMGKNGKDAIDIMFEAERFGQKNSKGFYAYSVDRRGKPKKDVDPTSYELLGAEFGELKAFESEDIIARTMIPMIIETVRCLEEGIIATPAEADMGLVFGLGFPPFRGGVFRYIDTMGVANFVALADKYAHLGGLYQVTDAMRELAANNGSYYQS</sequence>
<comment type="function">
    <text evidence="1">Involved in the aerobic and anaerobic degradation of long-chain fatty acids via beta-oxidation cycle. Catalyzes the formation of 3-oxoacyl-CoA from enoyl-CoA via L-3-hydroxyacyl-CoA. It can also use D-3-hydroxyacyl-CoA and cis-3-enoyl-CoA as substrate.</text>
</comment>
<comment type="catalytic activity">
    <reaction evidence="1">
        <text>a (3S)-3-hydroxyacyl-CoA + NAD(+) = a 3-oxoacyl-CoA + NADH + H(+)</text>
        <dbReference type="Rhea" id="RHEA:22432"/>
        <dbReference type="ChEBI" id="CHEBI:15378"/>
        <dbReference type="ChEBI" id="CHEBI:57318"/>
        <dbReference type="ChEBI" id="CHEBI:57540"/>
        <dbReference type="ChEBI" id="CHEBI:57945"/>
        <dbReference type="ChEBI" id="CHEBI:90726"/>
        <dbReference type="EC" id="1.1.1.35"/>
    </reaction>
</comment>
<comment type="catalytic activity">
    <reaction evidence="1">
        <text>a (3S)-3-hydroxyacyl-CoA = a (2E)-enoyl-CoA + H2O</text>
        <dbReference type="Rhea" id="RHEA:16105"/>
        <dbReference type="ChEBI" id="CHEBI:15377"/>
        <dbReference type="ChEBI" id="CHEBI:57318"/>
        <dbReference type="ChEBI" id="CHEBI:58856"/>
        <dbReference type="EC" id="4.2.1.17"/>
    </reaction>
</comment>
<comment type="catalytic activity">
    <reaction evidence="1">
        <text>a 4-saturated-(3S)-3-hydroxyacyl-CoA = a (3E)-enoyl-CoA + H2O</text>
        <dbReference type="Rhea" id="RHEA:20724"/>
        <dbReference type="ChEBI" id="CHEBI:15377"/>
        <dbReference type="ChEBI" id="CHEBI:58521"/>
        <dbReference type="ChEBI" id="CHEBI:137480"/>
        <dbReference type="EC" id="4.2.1.17"/>
    </reaction>
</comment>
<comment type="catalytic activity">
    <reaction evidence="1">
        <text>(3S)-3-hydroxybutanoyl-CoA = (3R)-3-hydroxybutanoyl-CoA</text>
        <dbReference type="Rhea" id="RHEA:21760"/>
        <dbReference type="ChEBI" id="CHEBI:57315"/>
        <dbReference type="ChEBI" id="CHEBI:57316"/>
        <dbReference type="EC" id="5.1.2.3"/>
    </reaction>
</comment>
<comment type="catalytic activity">
    <reaction evidence="1">
        <text>a (3Z)-enoyl-CoA = a 4-saturated (2E)-enoyl-CoA</text>
        <dbReference type="Rhea" id="RHEA:45900"/>
        <dbReference type="ChEBI" id="CHEBI:85097"/>
        <dbReference type="ChEBI" id="CHEBI:85489"/>
        <dbReference type="EC" id="5.3.3.8"/>
    </reaction>
</comment>
<comment type="catalytic activity">
    <reaction evidence="1">
        <text>a (3E)-enoyl-CoA = a 4-saturated (2E)-enoyl-CoA</text>
        <dbReference type="Rhea" id="RHEA:45228"/>
        <dbReference type="ChEBI" id="CHEBI:58521"/>
        <dbReference type="ChEBI" id="CHEBI:85097"/>
        <dbReference type="EC" id="5.3.3.8"/>
    </reaction>
</comment>
<comment type="pathway">
    <text evidence="1">Lipid metabolism; fatty acid beta-oxidation.</text>
</comment>
<comment type="subunit">
    <text evidence="1">Heterotetramer of two alpha chains (FadB) and two beta chains (FadA).</text>
</comment>
<comment type="similarity">
    <text evidence="1">In the N-terminal section; belongs to the enoyl-CoA hydratase/isomerase family.</text>
</comment>
<comment type="similarity">
    <text evidence="1">In the C-terminal section; belongs to the 3-hydroxyacyl-CoA dehydrogenase family.</text>
</comment>
<protein>
    <recommendedName>
        <fullName evidence="1">Fatty acid oxidation complex subunit alpha</fullName>
    </recommendedName>
    <domain>
        <recommendedName>
            <fullName evidence="1">Enoyl-CoA hydratase/Delta(3)-cis-Delta(2)-trans-enoyl-CoA isomerase/3-hydroxybutyryl-CoA epimerase</fullName>
            <ecNumber evidence="1">4.2.1.17</ecNumber>
            <ecNumber evidence="1">5.1.2.3</ecNumber>
            <ecNumber evidence="1">5.3.3.8</ecNumber>
        </recommendedName>
    </domain>
    <domain>
        <recommendedName>
            <fullName evidence="1">3-hydroxyacyl-CoA dehydrogenase</fullName>
            <ecNumber evidence="1">1.1.1.35</ecNumber>
        </recommendedName>
    </domain>
</protein>
<proteinExistence type="inferred from homology"/>